<accession>Q99PP0</accession>
<accession>Q9WUW4</accession>
<feature type="signal peptide" evidence="2">
    <location>
        <begin position="1"/>
        <end position="22"/>
    </location>
</feature>
<feature type="chain" id="PRO_0000014408" description="CCN family member 4">
    <location>
        <begin position="23"/>
        <end position="367"/>
    </location>
</feature>
<feature type="domain" description="IGFBP N-terminal" evidence="6">
    <location>
        <begin position="45"/>
        <end position="118"/>
    </location>
</feature>
<feature type="domain" description="VWFC" evidence="5">
    <location>
        <begin position="121"/>
        <end position="186"/>
    </location>
</feature>
<feature type="domain" description="TSP type-1" evidence="4">
    <location>
        <begin position="215"/>
        <end position="260"/>
    </location>
</feature>
<feature type="domain" description="CTCK" evidence="3">
    <location>
        <begin position="273"/>
        <end position="347"/>
    </location>
</feature>
<feature type="glycosylation site" description="N-linked (GlcNAc...) asparagine" evidence="2">
    <location>
        <position position="86"/>
    </location>
</feature>
<feature type="glycosylation site" description="N-linked (GlcNAc...) asparagine" evidence="2">
    <location>
        <position position="143"/>
    </location>
</feature>
<feature type="glycosylation site" description="N-linked (GlcNAc...) asparagine" evidence="2">
    <location>
        <position position="284"/>
    </location>
</feature>
<feature type="glycosylation site" description="N-linked (GlcNAc...) asparagine" evidence="2">
    <location>
        <position position="343"/>
    </location>
</feature>
<feature type="disulfide bond" evidence="6">
    <location>
        <begin position="49"/>
        <end position="73"/>
    </location>
</feature>
<feature type="disulfide bond" evidence="6">
    <location>
        <begin position="53"/>
        <end position="75"/>
    </location>
</feature>
<feature type="disulfide bond" evidence="6">
    <location>
        <begin position="55"/>
        <end position="76"/>
    </location>
</feature>
<feature type="disulfide bond" evidence="6">
    <location>
        <begin position="62"/>
        <end position="79"/>
    </location>
</feature>
<feature type="disulfide bond" evidence="6">
    <location>
        <begin position="87"/>
        <end position="101"/>
    </location>
</feature>
<feature type="disulfide bond" evidence="6">
    <location>
        <begin position="93"/>
        <end position="115"/>
    </location>
</feature>
<feature type="disulfide bond" evidence="1">
    <location>
        <begin position="273"/>
        <end position="310"/>
    </location>
</feature>
<feature type="disulfide bond" evidence="1">
    <location>
        <begin position="290"/>
        <end position="324"/>
    </location>
</feature>
<feature type="disulfide bond" evidence="1">
    <location>
        <begin position="301"/>
        <end position="340"/>
    </location>
</feature>
<feature type="disulfide bond" evidence="1">
    <location>
        <begin position="304"/>
        <end position="342"/>
    </location>
</feature>
<feature type="disulfide bond" evidence="1">
    <location>
        <begin position="309"/>
        <end position="346"/>
    </location>
</feature>
<feature type="sequence conflict" description="In Ref. 2; CAB41995." evidence="7" ref="2">
    <original>V</original>
    <variation>L</variation>
    <location>
        <position position="17"/>
    </location>
</feature>
<protein>
    <recommendedName>
        <fullName evidence="7">CCN family member 4</fullName>
    </recommendedName>
    <alternativeName>
        <fullName>ELM-1</fullName>
    </alternativeName>
    <alternativeName>
        <fullName>WNT1-inducible-signaling pathway protein 1</fullName>
        <shortName>WISP-1</shortName>
    </alternativeName>
</protein>
<proteinExistence type="evidence at transcript level"/>
<comment type="function">
    <text evidence="1">Downstream regulator in the Wnt/Frizzled-signaling pathway (By similarity). Associated with cell survival. Adheres to skin and melanoma fibroblasts (By similarity). In vitro binding to skin fibroblasts occurs through the proteoglycans, decorin and biglycan (By similarity).</text>
</comment>
<comment type="subcellular location">
    <subcellularLocation>
        <location evidence="1">Secreted</location>
    </subcellularLocation>
</comment>
<comment type="similarity">
    <text evidence="7">Belongs to the CCN family.</text>
</comment>
<keyword id="KW-0130">Cell adhesion</keyword>
<keyword id="KW-1015">Disulfide bond</keyword>
<keyword id="KW-0325">Glycoprotein</keyword>
<keyword id="KW-0656">Proto-oncogene</keyword>
<keyword id="KW-1185">Reference proteome</keyword>
<keyword id="KW-0964">Secreted</keyword>
<keyword id="KW-0732">Signal</keyword>
<keyword id="KW-0879">Wnt signaling pathway</keyword>
<gene>
    <name type="primary">Ccn4</name>
    <name type="synonym">Elm1</name>
    <name type="synonym">Wisp1</name>
</gene>
<sequence length="367" mass="40614">MRWLLPWTLAAVAVLMVGNILATALSPTPTTMTFTPAPLEETITRPEFCKWPCECPQAPPRCPLGVSLITDGCECCKICAQQLGDNCTEAAVCDPHRGLYCDYSGDRPRYAIGVCAQVVGVGCVLDGVRYTNGESFQPNCRYNCTCIDGTVGCTPLCLSPRPPRLWCRQPRHVRVPGQCCEQWVCDDDARRPRQTALLDTRAFAASGAVEQRYENCIAYTSPWSPCSTTCGLGISTRISNVNARCWPEQESRLCNLRPCDVDIRPHIKAGKKCLAVYQPEEATNFTLAGCVSTRTYRPKYCGVCTDNRCCIPYKSKTISVDFQCPEGPGFSRQVLWINACFCNLSCRNPNDIFADLESYPDFAEIAN</sequence>
<organism>
    <name type="scientific">Rattus norvegicus</name>
    <name type="common">Rat</name>
    <dbReference type="NCBI Taxonomy" id="10116"/>
    <lineage>
        <taxon>Eukaryota</taxon>
        <taxon>Metazoa</taxon>
        <taxon>Chordata</taxon>
        <taxon>Craniata</taxon>
        <taxon>Vertebrata</taxon>
        <taxon>Euteleostomi</taxon>
        <taxon>Mammalia</taxon>
        <taxon>Eutheria</taxon>
        <taxon>Euarchontoglires</taxon>
        <taxon>Glires</taxon>
        <taxon>Rodentia</taxon>
        <taxon>Myomorpha</taxon>
        <taxon>Muroidea</taxon>
        <taxon>Muridae</taxon>
        <taxon>Murinae</taxon>
        <taxon>Rattus</taxon>
    </lineage>
</organism>
<reference key="1">
    <citation type="journal article" date="2000" name="Genomics">
        <title>Gene expression in rat dermal papilla cells: analysis of 2529 ESTs.</title>
        <authorList>
            <person name="Sleeman M.A."/>
            <person name="Murison J.G."/>
            <person name="Strachan L."/>
            <person name="Kumble K.D."/>
            <person name="Glenn M.P."/>
            <person name="McGrath A."/>
            <person name="Bickerstaff P."/>
            <person name="Grierson A."/>
            <person name="Havukkala I."/>
            <person name="Tan P."/>
            <person name="Watson J.D."/>
        </authorList>
    </citation>
    <scope>NUCLEOTIDE SEQUENCE [MRNA]</scope>
    <source>
        <tissue>Hair follicle dermal papilla</tissue>
    </source>
</reference>
<reference key="2">
    <citation type="submission" date="1999-02" db="EMBL/GenBank/DDBJ databases">
        <title>Partial cDNA-sequence of rat ELM1.</title>
        <authorList>
            <person name="Jia J.D."/>
            <person name="Bauer M."/>
            <person name="Schuppan D."/>
        </authorList>
    </citation>
    <scope>NUCLEOTIDE SEQUENCE [MRNA] OF 1-74</scope>
</reference>
<dbReference type="EMBL" id="AF228049">
    <property type="protein sequence ID" value="AAK00729.1"/>
    <property type="molecule type" value="mRNA"/>
</dbReference>
<dbReference type="EMBL" id="AJ236871">
    <property type="protein sequence ID" value="CAB41995.1"/>
    <property type="molecule type" value="mRNA"/>
</dbReference>
<dbReference type="RefSeq" id="NP_113904.1">
    <property type="nucleotide sequence ID" value="NM_031716.1"/>
</dbReference>
<dbReference type="SMR" id="Q99PP0"/>
<dbReference type="FunCoup" id="Q99PP0">
    <property type="interactions" value="189"/>
</dbReference>
<dbReference type="STRING" id="10116.ENSRNOP00000009673"/>
<dbReference type="GlyCosmos" id="Q99PP0">
    <property type="glycosylation" value="4 sites, No reported glycans"/>
</dbReference>
<dbReference type="GlyGen" id="Q99PP0">
    <property type="glycosylation" value="5 sites"/>
</dbReference>
<dbReference type="PhosphoSitePlus" id="Q99PP0"/>
<dbReference type="PaxDb" id="10116-ENSRNOP00000009673"/>
<dbReference type="GeneID" id="65154"/>
<dbReference type="KEGG" id="rno:65154"/>
<dbReference type="UCSC" id="RGD:69431">
    <property type="organism name" value="rat"/>
</dbReference>
<dbReference type="AGR" id="RGD:69431"/>
<dbReference type="CTD" id="8840"/>
<dbReference type="RGD" id="69431">
    <property type="gene designation" value="Ccn4"/>
</dbReference>
<dbReference type="eggNOG" id="ENOG502QQQQ">
    <property type="taxonomic scope" value="Eukaryota"/>
</dbReference>
<dbReference type="InParanoid" id="Q99PP0"/>
<dbReference type="PhylomeDB" id="Q99PP0"/>
<dbReference type="PRO" id="PR:Q99PP0"/>
<dbReference type="Proteomes" id="UP000002494">
    <property type="component" value="Unplaced"/>
</dbReference>
<dbReference type="GO" id="GO:0005737">
    <property type="term" value="C:cytoplasm"/>
    <property type="evidence" value="ECO:0000250"/>
    <property type="project" value="UniProtKB"/>
</dbReference>
<dbReference type="GO" id="GO:0031012">
    <property type="term" value="C:extracellular matrix"/>
    <property type="evidence" value="ECO:0000318"/>
    <property type="project" value="GO_Central"/>
</dbReference>
<dbReference type="GO" id="GO:0005615">
    <property type="term" value="C:extracellular space"/>
    <property type="evidence" value="ECO:0000250"/>
    <property type="project" value="UniProtKB"/>
</dbReference>
<dbReference type="GO" id="GO:0008201">
    <property type="term" value="F:heparin binding"/>
    <property type="evidence" value="ECO:0000318"/>
    <property type="project" value="GO_Central"/>
</dbReference>
<dbReference type="GO" id="GO:0005178">
    <property type="term" value="F:integrin binding"/>
    <property type="evidence" value="ECO:0000318"/>
    <property type="project" value="GO_Central"/>
</dbReference>
<dbReference type="GO" id="GO:0060348">
    <property type="term" value="P:bone development"/>
    <property type="evidence" value="ECO:0000266"/>
    <property type="project" value="RGD"/>
</dbReference>
<dbReference type="GO" id="GO:0007155">
    <property type="term" value="P:cell adhesion"/>
    <property type="evidence" value="ECO:0000318"/>
    <property type="project" value="GO_Central"/>
</dbReference>
<dbReference type="GO" id="GO:0042593">
    <property type="term" value="P:glucose homeostasis"/>
    <property type="evidence" value="ECO:0000266"/>
    <property type="project" value="RGD"/>
</dbReference>
<dbReference type="GO" id="GO:0032331">
    <property type="term" value="P:negative regulation of chondrocyte differentiation"/>
    <property type="evidence" value="ECO:0000266"/>
    <property type="project" value="RGD"/>
</dbReference>
<dbReference type="GO" id="GO:0045599">
    <property type="term" value="P:negative regulation of fat cell differentiation"/>
    <property type="evidence" value="ECO:0000266"/>
    <property type="project" value="RGD"/>
</dbReference>
<dbReference type="GO" id="GO:0001649">
    <property type="term" value="P:osteoblast differentiation"/>
    <property type="evidence" value="ECO:0000266"/>
    <property type="project" value="RGD"/>
</dbReference>
<dbReference type="GO" id="GO:0030316">
    <property type="term" value="P:osteoclast differentiation"/>
    <property type="evidence" value="ECO:0000266"/>
    <property type="project" value="RGD"/>
</dbReference>
<dbReference type="GO" id="GO:0045597">
    <property type="term" value="P:positive regulation of cell differentiation"/>
    <property type="evidence" value="ECO:0000318"/>
    <property type="project" value="GO_Central"/>
</dbReference>
<dbReference type="GO" id="GO:0061051">
    <property type="term" value="P:positive regulation of cell growth involved in cardiac muscle cell development"/>
    <property type="evidence" value="ECO:0000315"/>
    <property type="project" value="RGD"/>
</dbReference>
<dbReference type="GO" id="GO:0050729">
    <property type="term" value="P:positive regulation of inflammatory response"/>
    <property type="evidence" value="ECO:0000266"/>
    <property type="project" value="RGD"/>
</dbReference>
<dbReference type="GO" id="GO:0045669">
    <property type="term" value="P:positive regulation of osteoblast differentiation"/>
    <property type="evidence" value="ECO:0000266"/>
    <property type="project" value="RGD"/>
</dbReference>
<dbReference type="GO" id="GO:0014911">
    <property type="term" value="P:positive regulation of smooth muscle cell migration"/>
    <property type="evidence" value="ECO:0000315"/>
    <property type="project" value="UniProtKB"/>
</dbReference>
<dbReference type="GO" id="GO:0048661">
    <property type="term" value="P:positive regulation of smooth muscle cell proliferation"/>
    <property type="evidence" value="ECO:0000315"/>
    <property type="project" value="RGD"/>
</dbReference>
<dbReference type="GO" id="GO:0030177">
    <property type="term" value="P:positive regulation of Wnt signaling pathway"/>
    <property type="evidence" value="ECO:0000266"/>
    <property type="project" value="RGD"/>
</dbReference>
<dbReference type="GO" id="GO:0090303">
    <property type="term" value="P:positive regulation of wound healing"/>
    <property type="evidence" value="ECO:0000266"/>
    <property type="project" value="RGD"/>
</dbReference>
<dbReference type="GO" id="GO:0001817">
    <property type="term" value="P:regulation of cytokine production"/>
    <property type="evidence" value="ECO:0000266"/>
    <property type="project" value="RGD"/>
</dbReference>
<dbReference type="GO" id="GO:0007165">
    <property type="term" value="P:signal transduction"/>
    <property type="evidence" value="ECO:0000318"/>
    <property type="project" value="GO_Central"/>
</dbReference>
<dbReference type="GO" id="GO:0016055">
    <property type="term" value="P:Wnt signaling pathway"/>
    <property type="evidence" value="ECO:0007669"/>
    <property type="project" value="UniProtKB-KW"/>
</dbReference>
<dbReference type="FunFam" id="2.20.100.10:FF:000069">
    <property type="entry name" value="Cellular communication network factor 4"/>
    <property type="match status" value="1"/>
</dbReference>
<dbReference type="Gene3D" id="2.10.70.10">
    <property type="entry name" value="Complement Module, domain 1"/>
    <property type="match status" value="1"/>
</dbReference>
<dbReference type="Gene3D" id="2.20.100.10">
    <property type="entry name" value="Thrombospondin type-1 (TSP1) repeat"/>
    <property type="match status" value="1"/>
</dbReference>
<dbReference type="InterPro" id="IPR050941">
    <property type="entry name" value="CCN"/>
</dbReference>
<dbReference type="InterPro" id="IPR006207">
    <property type="entry name" value="Cys_knot_C"/>
</dbReference>
<dbReference type="InterPro" id="IPR006208">
    <property type="entry name" value="Glyco_hormone_CN"/>
</dbReference>
<dbReference type="InterPro" id="IPR009030">
    <property type="entry name" value="Growth_fac_rcpt_cys_sf"/>
</dbReference>
<dbReference type="InterPro" id="IPR000867">
    <property type="entry name" value="IGFBP-like"/>
</dbReference>
<dbReference type="InterPro" id="IPR012395">
    <property type="entry name" value="IGFBP_CNN"/>
</dbReference>
<dbReference type="InterPro" id="IPR017891">
    <property type="entry name" value="Insulin_GF-bd_Cys-rich_CS"/>
</dbReference>
<dbReference type="InterPro" id="IPR043973">
    <property type="entry name" value="TSP1_CCN"/>
</dbReference>
<dbReference type="InterPro" id="IPR000884">
    <property type="entry name" value="TSP1_rpt"/>
</dbReference>
<dbReference type="InterPro" id="IPR036383">
    <property type="entry name" value="TSP1_rpt_sf"/>
</dbReference>
<dbReference type="InterPro" id="IPR001007">
    <property type="entry name" value="VWF_dom"/>
</dbReference>
<dbReference type="PANTHER" id="PTHR11348:SF4">
    <property type="entry name" value="CCN FAMILY MEMBER 4"/>
    <property type="match status" value="1"/>
</dbReference>
<dbReference type="PANTHER" id="PTHR11348">
    <property type="entry name" value="CONNECTIVE TISSUE GROWTH FACTOR-RELATED"/>
    <property type="match status" value="1"/>
</dbReference>
<dbReference type="Pfam" id="PF00007">
    <property type="entry name" value="Cys_knot"/>
    <property type="match status" value="1"/>
</dbReference>
<dbReference type="Pfam" id="PF00219">
    <property type="entry name" value="IGFBP"/>
    <property type="match status" value="1"/>
</dbReference>
<dbReference type="Pfam" id="PF19035">
    <property type="entry name" value="TSP1_CCN"/>
    <property type="match status" value="1"/>
</dbReference>
<dbReference type="Pfam" id="PF00093">
    <property type="entry name" value="VWC"/>
    <property type="match status" value="1"/>
</dbReference>
<dbReference type="PIRSF" id="PIRSF036495">
    <property type="entry name" value="IGFBP_rP_CNN"/>
    <property type="match status" value="1"/>
</dbReference>
<dbReference type="SMART" id="SM00041">
    <property type="entry name" value="CT"/>
    <property type="match status" value="1"/>
</dbReference>
<dbReference type="SMART" id="SM00121">
    <property type="entry name" value="IB"/>
    <property type="match status" value="1"/>
</dbReference>
<dbReference type="SMART" id="SM00209">
    <property type="entry name" value="TSP1"/>
    <property type="match status" value="1"/>
</dbReference>
<dbReference type="SMART" id="SM00214">
    <property type="entry name" value="VWC"/>
    <property type="match status" value="1"/>
</dbReference>
<dbReference type="SUPFAM" id="SSF57603">
    <property type="entry name" value="FnI-like domain"/>
    <property type="match status" value="1"/>
</dbReference>
<dbReference type="SUPFAM" id="SSF57184">
    <property type="entry name" value="Growth factor receptor domain"/>
    <property type="match status" value="1"/>
</dbReference>
<dbReference type="SUPFAM" id="SSF82895">
    <property type="entry name" value="TSP-1 type 1 repeat"/>
    <property type="match status" value="1"/>
</dbReference>
<dbReference type="PROSITE" id="PS01185">
    <property type="entry name" value="CTCK_1"/>
    <property type="match status" value="1"/>
</dbReference>
<dbReference type="PROSITE" id="PS01225">
    <property type="entry name" value="CTCK_2"/>
    <property type="match status" value="1"/>
</dbReference>
<dbReference type="PROSITE" id="PS00222">
    <property type="entry name" value="IGFBP_N_1"/>
    <property type="match status" value="1"/>
</dbReference>
<dbReference type="PROSITE" id="PS51323">
    <property type="entry name" value="IGFBP_N_2"/>
    <property type="match status" value="1"/>
</dbReference>
<dbReference type="PROSITE" id="PS50092">
    <property type="entry name" value="TSP1"/>
    <property type="match status" value="1"/>
</dbReference>
<dbReference type="PROSITE" id="PS01208">
    <property type="entry name" value="VWFC_1"/>
    <property type="match status" value="1"/>
</dbReference>
<dbReference type="PROSITE" id="PS50184">
    <property type="entry name" value="VWFC_2"/>
    <property type="match status" value="1"/>
</dbReference>
<evidence type="ECO:0000250" key="1"/>
<evidence type="ECO:0000255" key="2"/>
<evidence type="ECO:0000255" key="3">
    <source>
        <dbReference type="PROSITE-ProRule" id="PRU00039"/>
    </source>
</evidence>
<evidence type="ECO:0000255" key="4">
    <source>
        <dbReference type="PROSITE-ProRule" id="PRU00210"/>
    </source>
</evidence>
<evidence type="ECO:0000255" key="5">
    <source>
        <dbReference type="PROSITE-ProRule" id="PRU00220"/>
    </source>
</evidence>
<evidence type="ECO:0000255" key="6">
    <source>
        <dbReference type="PROSITE-ProRule" id="PRU00653"/>
    </source>
</evidence>
<evidence type="ECO:0000305" key="7"/>
<name>CCN4_RAT</name>